<feature type="signal peptide" evidence="2">
    <location>
        <begin position="1"/>
        <end position="24"/>
    </location>
</feature>
<feature type="chain" id="PRO_0000034787" description="Probable hemoglobin and hemoglobin-haptoglobin-binding protein 3">
    <location>
        <begin position="25"/>
        <end position="1084"/>
    </location>
</feature>
<feature type="repeat" description="1">
    <location>
        <begin position="26"/>
        <end position="29"/>
    </location>
</feature>
<feature type="repeat" description="2">
    <location>
        <begin position="30"/>
        <end position="33"/>
    </location>
</feature>
<feature type="repeat" description="3">
    <location>
        <begin position="34"/>
        <end position="37"/>
    </location>
</feature>
<feature type="repeat" description="4">
    <location>
        <begin position="38"/>
        <end position="41"/>
    </location>
</feature>
<feature type="repeat" description="5">
    <location>
        <begin position="42"/>
        <end position="45"/>
    </location>
</feature>
<feature type="repeat" description="6">
    <location>
        <begin position="46"/>
        <end position="49"/>
    </location>
</feature>
<feature type="repeat" description="7">
    <location>
        <begin position="50"/>
        <end position="53"/>
    </location>
</feature>
<feature type="repeat" description="8">
    <location>
        <begin position="54"/>
        <end position="57"/>
    </location>
</feature>
<feature type="repeat" description="9">
    <location>
        <begin position="58"/>
        <end position="61"/>
    </location>
</feature>
<feature type="repeat" description="10">
    <location>
        <begin position="62"/>
        <end position="65"/>
    </location>
</feature>
<feature type="repeat" description="11">
    <location>
        <begin position="66"/>
        <end position="69"/>
    </location>
</feature>
<feature type="repeat" description="12">
    <location>
        <begin position="70"/>
        <end position="73"/>
    </location>
</feature>
<feature type="domain" description="TBDR plug" evidence="3">
    <location>
        <begin position="95"/>
        <end position="220"/>
    </location>
</feature>
<feature type="domain" description="TBDR beta-barrel" evidence="3">
    <location>
        <begin position="228"/>
        <end position="1084"/>
    </location>
</feature>
<feature type="region of interest" description="Disordered" evidence="4">
    <location>
        <begin position="26"/>
        <end position="77"/>
    </location>
</feature>
<feature type="region of interest" description="12 X 4 AA tandem repeats of Q-P-T-N">
    <location>
        <begin position="26"/>
        <end position="73"/>
    </location>
</feature>
<feature type="short sequence motif" description="TonB box">
    <location>
        <begin position="83"/>
        <end position="90"/>
    </location>
</feature>
<feature type="short sequence motif" description="TonB C-terminal box">
    <location>
        <begin position="1067"/>
        <end position="1084"/>
    </location>
</feature>
<feature type="compositionally biased region" description="Low complexity" evidence="4">
    <location>
        <begin position="26"/>
        <end position="75"/>
    </location>
</feature>
<proteinExistence type="evidence at protein level"/>
<name>HGP3_HAEIN</name>
<organism>
    <name type="scientific">Haemophilus influenzae (strain ATCC 51907 / DSM 11121 / KW20 / Rd)</name>
    <dbReference type="NCBI Taxonomy" id="71421"/>
    <lineage>
        <taxon>Bacteria</taxon>
        <taxon>Pseudomonadati</taxon>
        <taxon>Pseudomonadota</taxon>
        <taxon>Gammaproteobacteria</taxon>
        <taxon>Pasteurellales</taxon>
        <taxon>Pasteurellaceae</taxon>
        <taxon>Haemophilus</taxon>
    </lineage>
</organism>
<accession>P44836</accession>
<protein>
    <recommendedName>
        <fullName>Probable hemoglobin and hemoglobin-haptoglobin-binding protein 3</fullName>
    </recommendedName>
</protein>
<comment type="function">
    <text evidence="1">Acts as a receptor for hemoglobin or the hemoglobin/haptoglobin complex of the human host and is required for heme uptake.</text>
</comment>
<comment type="subcellular location">
    <subcellularLocation>
        <location evidence="3">Cell outer membrane</location>
        <topology evidence="3">Multi-pass membrane protein</topology>
    </subcellularLocation>
</comment>
<comment type="miscellaneous">
    <text evidence="1">This protein is subject to phase-variable expression associated with alteration in the length of the CCAA repeat region. This mechanism is called slipped-strand mispairing. Addition or loss of CCAA repeat units would change the reading frame and result in introduction of stop codons downstream of the repeat region. This may be a mechanism of regulation and a way to avoid the immunological response of the host (By similarity).</text>
</comment>
<comment type="similarity">
    <text evidence="5">Belongs to the TonB-dependent receptor family. Hemoglobin/haptoglobin binding protein subfamily.</text>
</comment>
<keyword id="KW-0998">Cell outer membrane</keyword>
<keyword id="KW-0472">Membrane</keyword>
<keyword id="KW-0675">Receptor</keyword>
<keyword id="KW-1185">Reference proteome</keyword>
<keyword id="KW-0677">Repeat</keyword>
<keyword id="KW-0732">Signal</keyword>
<keyword id="KW-0798">TonB box</keyword>
<keyword id="KW-0812">Transmembrane</keyword>
<keyword id="KW-1134">Transmembrane beta strand</keyword>
<keyword id="KW-0813">Transport</keyword>
<evidence type="ECO:0000250" key="1"/>
<evidence type="ECO:0000255" key="2"/>
<evidence type="ECO:0000255" key="3">
    <source>
        <dbReference type="PROSITE-ProRule" id="PRU01360"/>
    </source>
</evidence>
<evidence type="ECO:0000256" key="4">
    <source>
        <dbReference type="SAM" id="MobiDB-lite"/>
    </source>
</evidence>
<evidence type="ECO:0000305" key="5"/>
<gene>
    <name type="ordered locus">HI_0712</name>
</gene>
<dbReference type="EMBL" id="L42023">
    <property type="protein sequence ID" value="AAC22369.1"/>
    <property type="molecule type" value="Genomic_DNA"/>
</dbReference>
<dbReference type="PIR" id="B64088">
    <property type="entry name" value="B64088"/>
</dbReference>
<dbReference type="RefSeq" id="NP_438870.1">
    <property type="nucleotide sequence ID" value="NC_000907.1"/>
</dbReference>
<dbReference type="SMR" id="P44836"/>
<dbReference type="STRING" id="71421.HI_0712"/>
<dbReference type="EnsemblBacteria" id="AAC22369">
    <property type="protein sequence ID" value="AAC22369"/>
    <property type="gene ID" value="HI_0712"/>
</dbReference>
<dbReference type="KEGG" id="hin:HI_0712"/>
<dbReference type="PATRIC" id="fig|71421.8.peg.743"/>
<dbReference type="eggNOG" id="COG1629">
    <property type="taxonomic scope" value="Bacteria"/>
</dbReference>
<dbReference type="eggNOG" id="COG4771">
    <property type="taxonomic scope" value="Bacteria"/>
</dbReference>
<dbReference type="HOGENOM" id="CLU_008287_19_0_6"/>
<dbReference type="OrthoDB" id="9764669at2"/>
<dbReference type="PhylomeDB" id="P44836"/>
<dbReference type="BioCyc" id="HINF71421:G1GJ1-746-MONOMER"/>
<dbReference type="Proteomes" id="UP000000579">
    <property type="component" value="Chromosome"/>
</dbReference>
<dbReference type="GO" id="GO:0009279">
    <property type="term" value="C:cell outer membrane"/>
    <property type="evidence" value="ECO:0000318"/>
    <property type="project" value="GO_Central"/>
</dbReference>
<dbReference type="GO" id="GO:0015344">
    <property type="term" value="F:siderophore uptake transmembrane transporter activity"/>
    <property type="evidence" value="ECO:0000318"/>
    <property type="project" value="GO_Central"/>
</dbReference>
<dbReference type="GO" id="GO:0044718">
    <property type="term" value="P:siderophore transmembrane transport"/>
    <property type="evidence" value="ECO:0000318"/>
    <property type="project" value="GO_Central"/>
</dbReference>
<dbReference type="Gene3D" id="2.40.170.20">
    <property type="entry name" value="TonB-dependent receptor, beta-barrel domain"/>
    <property type="match status" value="2"/>
</dbReference>
<dbReference type="Gene3D" id="2.170.130.10">
    <property type="entry name" value="TonB-dependent receptor, plug domain"/>
    <property type="match status" value="1"/>
</dbReference>
<dbReference type="InterPro" id="IPR012910">
    <property type="entry name" value="Plug_dom"/>
</dbReference>
<dbReference type="InterPro" id="IPR037066">
    <property type="entry name" value="Plug_dom_sf"/>
</dbReference>
<dbReference type="InterPro" id="IPR006970">
    <property type="entry name" value="PT"/>
</dbReference>
<dbReference type="InterPro" id="IPR039426">
    <property type="entry name" value="TonB-dep_rcpt-like"/>
</dbReference>
<dbReference type="InterPro" id="IPR000531">
    <property type="entry name" value="TonB-dep_rcpt_b-brl"/>
</dbReference>
<dbReference type="InterPro" id="IPR036942">
    <property type="entry name" value="TonB_rcpt_b-brl_sf"/>
</dbReference>
<dbReference type="InterPro" id="IPR010917">
    <property type="entry name" value="TonB_rcpt_CS"/>
</dbReference>
<dbReference type="PANTHER" id="PTHR30069:SF29">
    <property type="entry name" value="HEMOGLOBIN AND HEMOGLOBIN-HAPTOGLOBIN-BINDING PROTEIN 1-RELATED"/>
    <property type="match status" value="1"/>
</dbReference>
<dbReference type="PANTHER" id="PTHR30069">
    <property type="entry name" value="TONB-DEPENDENT OUTER MEMBRANE RECEPTOR"/>
    <property type="match status" value="1"/>
</dbReference>
<dbReference type="Pfam" id="PF07715">
    <property type="entry name" value="Plug"/>
    <property type="match status" value="1"/>
</dbReference>
<dbReference type="Pfam" id="PF04886">
    <property type="entry name" value="PT"/>
    <property type="match status" value="2"/>
</dbReference>
<dbReference type="Pfam" id="PF00593">
    <property type="entry name" value="TonB_dep_Rec_b-barrel"/>
    <property type="match status" value="1"/>
</dbReference>
<dbReference type="SUPFAM" id="SSF56935">
    <property type="entry name" value="Porins"/>
    <property type="match status" value="1"/>
</dbReference>
<dbReference type="PROSITE" id="PS01156">
    <property type="entry name" value="TONB_DEPENDENT_REC_2"/>
    <property type="match status" value="1"/>
</dbReference>
<dbReference type="PROSITE" id="PS52016">
    <property type="entry name" value="TONB_DEPENDENT_REC_3"/>
    <property type="match status" value="1"/>
</dbReference>
<sequence length="1084" mass="123955">MTNFKFSLLACSIAFALNASTVYAAQPTNQPTNQPTNQPTNQPTNQPTNQPTNQPTNQPTNQPTNQPTNQPTNQNSNVSEQLEQINVSGSSENINIKEKKVGETQISAKKLAKQQASDSRDLVRYETGITVVETGRTGASGYAVRGVDENRVGIMVDGLRQAETLSSQGFKELFEGYGNFNNTRNSIEIENVKTATITKGADSLKSGSGALGGSVIFETKDARDYLIDKDYYLSYKRGYQTMNNQNLKTLTLAGRSKKFDILIIDTTRDGHEIENYDYKIYPNKQADLRAVGPTREKADPYQITRQSTLIKLGFQPNENHRLSVALDDSTLETKGIDLSYALRPYSTAGNEKYGERIINDQSKRKNIQFSYENFSQTPFWDHIKLSYSSQKITNKARSDEYCHQSTCNGVSNPQGLHLVEEGGVYKIVDKNGDKLTYNKNAGWYGQFQNKNGENVDNDIDSTGGSLDSVLIDCERLNCKNKFQVFVEKDEEGKDKYEYEERDIIVETLPNGKKYGKITLKKGKTPLWDDVYQEESARFLFPKSYGYSTDFVNDRDLNTNTQQIKLDLDKEFSLWHTQHSLKYGGFYEKTLKSMVNHQYNTVANVQWWAGNFFCNKLENGKRTPAPDYSHRCSLMNTDKGKETYLIPVTTKNNVLYFGDNVQLTSWLGLDLNYRYDHVKYLPSYDEKIPVPNGLITGLFKKFGPKDYVYGSKYSKPADYTDCTYNSDCYKKNFKDNLALLLRKTDYKHHSYNLGLNLDPTDWLRVQLKYANGFRAPTSDEIYMTFKHPQFSIQPNTDLKAETSKTKEVAFTFYKNSSYITLNAFQNDYRNFIDLVEVGPRPIEEGSTIAYPFHQNQNRDRARVRGIEIASRLEMGDLFEKLQGFHLGYKFTYQKGRIKDNGLNPKYKEFLELNKDKHPEYEAIARKPQPMNALQPTTSVYNIGYDAPSQKWGVDMYITNVAAKKAKDSFNSQWTSMVKRKEKIYGNEKDAEASTANGKEVKDSRGLWRNNRYTVIDTIAYWKPIKNLTFTAGVYNLTNKKYLTWDSARSIRHLGTINRVETATGKGLNRFYAPGRNYRMSVQFEF</sequence>
<reference key="1">
    <citation type="journal article" date="1995" name="Science">
        <title>Whole-genome random sequencing and assembly of Haemophilus influenzae Rd.</title>
        <authorList>
            <person name="Fleischmann R.D."/>
            <person name="Adams M.D."/>
            <person name="White O."/>
            <person name="Clayton R.A."/>
            <person name="Kirkness E.F."/>
            <person name="Kerlavage A.R."/>
            <person name="Bult C.J."/>
            <person name="Tomb J.-F."/>
            <person name="Dougherty B.A."/>
            <person name="Merrick J.M."/>
            <person name="McKenney K."/>
            <person name="Sutton G.G."/>
            <person name="FitzHugh W."/>
            <person name="Fields C.A."/>
            <person name="Gocayne J.D."/>
            <person name="Scott J.D."/>
            <person name="Shirley R."/>
            <person name="Liu L.-I."/>
            <person name="Glodek A."/>
            <person name="Kelley J.M."/>
            <person name="Weidman J.F."/>
            <person name="Phillips C.A."/>
            <person name="Spriggs T."/>
            <person name="Hedblom E."/>
            <person name="Cotton M.D."/>
            <person name="Utterback T.R."/>
            <person name="Hanna M.C."/>
            <person name="Nguyen D.T."/>
            <person name="Saudek D.M."/>
            <person name="Brandon R.C."/>
            <person name="Fine L.D."/>
            <person name="Fritchman J.L."/>
            <person name="Fuhrmann J.L."/>
            <person name="Geoghagen N.S.M."/>
            <person name="Gnehm C.L."/>
            <person name="McDonald L.A."/>
            <person name="Small K.V."/>
            <person name="Fraser C.M."/>
            <person name="Smith H.O."/>
            <person name="Venter J.C."/>
        </authorList>
    </citation>
    <scope>NUCLEOTIDE SEQUENCE [LARGE SCALE GENOMIC DNA]</scope>
    <source>
        <strain>ATCC 51907 / DSM 11121 / KW20 / Rd</strain>
    </source>
</reference>
<reference key="2">
    <citation type="journal article" date="2000" name="Electrophoresis">
        <title>Two-dimensional map of the proteome of Haemophilus influenzae.</title>
        <authorList>
            <person name="Langen H."/>
            <person name="Takacs B."/>
            <person name="Evers S."/>
            <person name="Berndt P."/>
            <person name="Lahm H.W."/>
            <person name="Wipf B."/>
            <person name="Gray C."/>
            <person name="Fountoulakis M."/>
        </authorList>
    </citation>
    <scope>IDENTIFICATION BY MASS SPECTROMETRY</scope>
    <source>
        <strain>ATCC 51907 / DSM 11121 / KW20 / Rd</strain>
    </source>
</reference>